<feature type="chain" id="PRO_1000063370" description="Phosphoribosyl-ATP pyrophosphatase">
    <location>
        <begin position="1"/>
        <end position="111"/>
    </location>
</feature>
<sequence length="111" mass="12302">MSDTLNRLAEVLEERKQAAPDSSYVASLYHKGLNKILEKLGEESIETIIAAKDAATSKDYSDVIYETADLWFHSLVMLSALGQHPQAVLDELERRFGLSGHDEKAARQPSA</sequence>
<protein>
    <recommendedName>
        <fullName evidence="1">Phosphoribosyl-ATP pyrophosphatase</fullName>
        <shortName evidence="1">PRA-PH</shortName>
        <ecNumber evidence="1">3.6.1.31</ecNumber>
    </recommendedName>
</protein>
<reference key="1">
    <citation type="journal article" date="2006" name="Nat. Biotechnol.">
        <title>Complete genome sequence of the entomopathogenic and metabolically versatile soil bacterium Pseudomonas entomophila.</title>
        <authorList>
            <person name="Vodovar N."/>
            <person name="Vallenet D."/>
            <person name="Cruveiller S."/>
            <person name="Rouy Z."/>
            <person name="Barbe V."/>
            <person name="Acosta C."/>
            <person name="Cattolico L."/>
            <person name="Jubin C."/>
            <person name="Lajus A."/>
            <person name="Segurens B."/>
            <person name="Vacherie B."/>
            <person name="Wincker P."/>
            <person name="Weissenbach J."/>
            <person name="Lemaitre B."/>
            <person name="Medigue C."/>
            <person name="Boccard F."/>
        </authorList>
    </citation>
    <scope>NUCLEOTIDE SEQUENCE [LARGE SCALE GENOMIC DNA]</scope>
    <source>
        <strain>L48</strain>
    </source>
</reference>
<evidence type="ECO:0000255" key="1">
    <source>
        <dbReference type="HAMAP-Rule" id="MF_01020"/>
    </source>
</evidence>
<dbReference type="EC" id="3.6.1.31" evidence="1"/>
<dbReference type="EMBL" id="CT573326">
    <property type="protein sequence ID" value="CAK17710.1"/>
    <property type="molecule type" value="Genomic_DNA"/>
</dbReference>
<dbReference type="RefSeq" id="WP_011536070.1">
    <property type="nucleotide sequence ID" value="NC_008027.1"/>
</dbReference>
<dbReference type="SMR" id="Q1I3S6"/>
<dbReference type="STRING" id="384676.PSEEN5077"/>
<dbReference type="GeneID" id="32808015"/>
<dbReference type="KEGG" id="pen:PSEEN5077"/>
<dbReference type="eggNOG" id="COG0140">
    <property type="taxonomic scope" value="Bacteria"/>
</dbReference>
<dbReference type="HOGENOM" id="CLU_123337_1_2_6"/>
<dbReference type="OrthoDB" id="9814738at2"/>
<dbReference type="UniPathway" id="UPA00031">
    <property type="reaction ID" value="UER00007"/>
</dbReference>
<dbReference type="Proteomes" id="UP000000658">
    <property type="component" value="Chromosome"/>
</dbReference>
<dbReference type="GO" id="GO:0005737">
    <property type="term" value="C:cytoplasm"/>
    <property type="evidence" value="ECO:0007669"/>
    <property type="project" value="UniProtKB-SubCell"/>
</dbReference>
<dbReference type="GO" id="GO:0005524">
    <property type="term" value="F:ATP binding"/>
    <property type="evidence" value="ECO:0007669"/>
    <property type="project" value="UniProtKB-KW"/>
</dbReference>
<dbReference type="GO" id="GO:0004636">
    <property type="term" value="F:phosphoribosyl-ATP diphosphatase activity"/>
    <property type="evidence" value="ECO:0007669"/>
    <property type="project" value="UniProtKB-UniRule"/>
</dbReference>
<dbReference type="GO" id="GO:0000105">
    <property type="term" value="P:L-histidine biosynthetic process"/>
    <property type="evidence" value="ECO:0007669"/>
    <property type="project" value="UniProtKB-UniRule"/>
</dbReference>
<dbReference type="CDD" id="cd11534">
    <property type="entry name" value="NTP-PPase_HisIE_like"/>
    <property type="match status" value="1"/>
</dbReference>
<dbReference type="Gene3D" id="1.10.287.1080">
    <property type="entry name" value="MazG-like"/>
    <property type="match status" value="1"/>
</dbReference>
<dbReference type="HAMAP" id="MF_01020">
    <property type="entry name" value="HisE"/>
    <property type="match status" value="1"/>
</dbReference>
<dbReference type="InterPro" id="IPR008179">
    <property type="entry name" value="HisE"/>
</dbReference>
<dbReference type="InterPro" id="IPR021130">
    <property type="entry name" value="PRib-ATP_PPHydrolase-like"/>
</dbReference>
<dbReference type="NCBIfam" id="TIGR03188">
    <property type="entry name" value="histidine_hisI"/>
    <property type="match status" value="1"/>
</dbReference>
<dbReference type="NCBIfam" id="NF001611">
    <property type="entry name" value="PRK00400.1-3"/>
    <property type="match status" value="1"/>
</dbReference>
<dbReference type="PANTHER" id="PTHR42945">
    <property type="entry name" value="HISTIDINE BIOSYNTHESIS BIFUNCTIONAL PROTEIN"/>
    <property type="match status" value="1"/>
</dbReference>
<dbReference type="PANTHER" id="PTHR42945:SF9">
    <property type="entry name" value="HISTIDINE BIOSYNTHESIS BIFUNCTIONAL PROTEIN HISIE"/>
    <property type="match status" value="1"/>
</dbReference>
<dbReference type="Pfam" id="PF01503">
    <property type="entry name" value="PRA-PH"/>
    <property type="match status" value="1"/>
</dbReference>
<dbReference type="SUPFAM" id="SSF101386">
    <property type="entry name" value="all-alpha NTP pyrophosphatases"/>
    <property type="match status" value="1"/>
</dbReference>
<accession>Q1I3S6</accession>
<proteinExistence type="inferred from homology"/>
<comment type="catalytic activity">
    <reaction evidence="1">
        <text>1-(5-phospho-beta-D-ribosyl)-ATP + H2O = 1-(5-phospho-beta-D-ribosyl)-5'-AMP + diphosphate + H(+)</text>
        <dbReference type="Rhea" id="RHEA:22828"/>
        <dbReference type="ChEBI" id="CHEBI:15377"/>
        <dbReference type="ChEBI" id="CHEBI:15378"/>
        <dbReference type="ChEBI" id="CHEBI:33019"/>
        <dbReference type="ChEBI" id="CHEBI:59457"/>
        <dbReference type="ChEBI" id="CHEBI:73183"/>
        <dbReference type="EC" id="3.6.1.31"/>
    </reaction>
</comment>
<comment type="pathway">
    <text evidence="1">Amino-acid biosynthesis; L-histidine biosynthesis; L-histidine from 5-phospho-alpha-D-ribose 1-diphosphate: step 2/9.</text>
</comment>
<comment type="subcellular location">
    <subcellularLocation>
        <location evidence="1">Cytoplasm</location>
    </subcellularLocation>
</comment>
<comment type="similarity">
    <text evidence="1">Belongs to the PRA-PH family.</text>
</comment>
<name>HIS2_PSEE4</name>
<gene>
    <name evidence="1" type="primary">hisE</name>
    <name type="ordered locus">PSEEN5077</name>
</gene>
<organism>
    <name type="scientific">Pseudomonas entomophila (strain L48)</name>
    <dbReference type="NCBI Taxonomy" id="384676"/>
    <lineage>
        <taxon>Bacteria</taxon>
        <taxon>Pseudomonadati</taxon>
        <taxon>Pseudomonadota</taxon>
        <taxon>Gammaproteobacteria</taxon>
        <taxon>Pseudomonadales</taxon>
        <taxon>Pseudomonadaceae</taxon>
        <taxon>Pseudomonas</taxon>
    </lineage>
</organism>
<keyword id="KW-0028">Amino-acid biosynthesis</keyword>
<keyword id="KW-0067">ATP-binding</keyword>
<keyword id="KW-0963">Cytoplasm</keyword>
<keyword id="KW-0368">Histidine biosynthesis</keyword>
<keyword id="KW-0378">Hydrolase</keyword>
<keyword id="KW-0547">Nucleotide-binding</keyword>